<proteinExistence type="inferred from homology"/>
<dbReference type="EC" id="2.1.1.33" evidence="2"/>
<dbReference type="EMBL" id="CP000411">
    <property type="protein sequence ID" value="ABJ57145.1"/>
    <property type="molecule type" value="Genomic_DNA"/>
</dbReference>
<dbReference type="RefSeq" id="WP_002820317.1">
    <property type="nucleotide sequence ID" value="NC_008528.1"/>
</dbReference>
<dbReference type="SMR" id="Q04EH7"/>
<dbReference type="STRING" id="203123.OEOE_1272"/>
<dbReference type="KEGG" id="ooe:OEOE_1272"/>
<dbReference type="PATRIC" id="fig|203123.7.peg.1284"/>
<dbReference type="eggNOG" id="COG0220">
    <property type="taxonomic scope" value="Bacteria"/>
</dbReference>
<dbReference type="HOGENOM" id="CLU_050910_2_1_9"/>
<dbReference type="UniPathway" id="UPA00989"/>
<dbReference type="Proteomes" id="UP000000774">
    <property type="component" value="Chromosome"/>
</dbReference>
<dbReference type="GO" id="GO:0043527">
    <property type="term" value="C:tRNA methyltransferase complex"/>
    <property type="evidence" value="ECO:0007669"/>
    <property type="project" value="TreeGrafter"/>
</dbReference>
<dbReference type="GO" id="GO:0008176">
    <property type="term" value="F:tRNA (guanine(46)-N7)-methyltransferase activity"/>
    <property type="evidence" value="ECO:0007669"/>
    <property type="project" value="UniProtKB-UniRule"/>
</dbReference>
<dbReference type="Gene3D" id="3.40.50.150">
    <property type="entry name" value="Vaccinia Virus protein VP39"/>
    <property type="match status" value="1"/>
</dbReference>
<dbReference type="HAMAP" id="MF_01057">
    <property type="entry name" value="tRNA_methyltr_TrmB"/>
    <property type="match status" value="1"/>
</dbReference>
<dbReference type="InterPro" id="IPR029063">
    <property type="entry name" value="SAM-dependent_MTases_sf"/>
</dbReference>
<dbReference type="InterPro" id="IPR003358">
    <property type="entry name" value="tRNA_(Gua-N-7)_MeTrfase_Trmb"/>
</dbReference>
<dbReference type="InterPro" id="IPR055361">
    <property type="entry name" value="tRNA_methyltr_TrmB_bact"/>
</dbReference>
<dbReference type="NCBIfam" id="NF001080">
    <property type="entry name" value="PRK00121.2-2"/>
    <property type="match status" value="1"/>
</dbReference>
<dbReference type="NCBIfam" id="TIGR00091">
    <property type="entry name" value="tRNA (guanosine(46)-N7)-methyltransferase TrmB"/>
    <property type="match status" value="1"/>
</dbReference>
<dbReference type="PANTHER" id="PTHR23417">
    <property type="entry name" value="3-DEOXY-D-MANNO-OCTULOSONIC-ACID TRANSFERASE/TRNA GUANINE-N 7 - -METHYLTRANSFERASE"/>
    <property type="match status" value="1"/>
</dbReference>
<dbReference type="PANTHER" id="PTHR23417:SF14">
    <property type="entry name" value="PENTACOTRIPEPTIDE-REPEAT REGION OF PRORP DOMAIN-CONTAINING PROTEIN"/>
    <property type="match status" value="1"/>
</dbReference>
<dbReference type="Pfam" id="PF02390">
    <property type="entry name" value="Methyltransf_4"/>
    <property type="match status" value="1"/>
</dbReference>
<dbReference type="SUPFAM" id="SSF53335">
    <property type="entry name" value="S-adenosyl-L-methionine-dependent methyltransferases"/>
    <property type="match status" value="1"/>
</dbReference>
<dbReference type="PROSITE" id="PS51625">
    <property type="entry name" value="SAM_MT_TRMB"/>
    <property type="match status" value="1"/>
</dbReference>
<accession>Q04EH7</accession>
<comment type="function">
    <text evidence="2">Catalyzes the formation of N(7)-methylguanine at position 46 (m7G46) in tRNA.</text>
</comment>
<comment type="catalytic activity">
    <reaction evidence="2">
        <text>guanosine(46) in tRNA + S-adenosyl-L-methionine = N(7)-methylguanosine(46) in tRNA + S-adenosyl-L-homocysteine</text>
        <dbReference type="Rhea" id="RHEA:42708"/>
        <dbReference type="Rhea" id="RHEA-COMP:10188"/>
        <dbReference type="Rhea" id="RHEA-COMP:10189"/>
        <dbReference type="ChEBI" id="CHEBI:57856"/>
        <dbReference type="ChEBI" id="CHEBI:59789"/>
        <dbReference type="ChEBI" id="CHEBI:74269"/>
        <dbReference type="ChEBI" id="CHEBI:74480"/>
        <dbReference type="EC" id="2.1.1.33"/>
    </reaction>
</comment>
<comment type="pathway">
    <text evidence="2">tRNA modification; N(7)-methylguanine-tRNA biosynthesis.</text>
</comment>
<comment type="similarity">
    <text evidence="2">Belongs to the class I-like SAM-binding methyltransferase superfamily. TrmB family.</text>
</comment>
<feature type="chain" id="PRO_0000288193" description="tRNA (guanine-N(7)-)-methyltransferase">
    <location>
        <begin position="1"/>
        <end position="219"/>
    </location>
</feature>
<feature type="region of interest" description="Interaction with RNA" evidence="2">
    <location>
        <begin position="128"/>
        <end position="133"/>
    </location>
</feature>
<feature type="active site" evidence="1">
    <location>
        <position position="122"/>
    </location>
</feature>
<feature type="binding site" evidence="2">
    <location>
        <position position="46"/>
    </location>
    <ligand>
        <name>S-adenosyl-L-methionine</name>
        <dbReference type="ChEBI" id="CHEBI:59789"/>
    </ligand>
</feature>
<feature type="binding site" evidence="2">
    <location>
        <position position="71"/>
    </location>
    <ligand>
        <name>S-adenosyl-L-methionine</name>
        <dbReference type="ChEBI" id="CHEBI:59789"/>
    </ligand>
</feature>
<feature type="binding site" evidence="2">
    <location>
        <position position="100"/>
    </location>
    <ligand>
        <name>S-adenosyl-L-methionine</name>
        <dbReference type="ChEBI" id="CHEBI:59789"/>
    </ligand>
</feature>
<feature type="binding site" evidence="2">
    <location>
        <position position="122"/>
    </location>
    <ligand>
        <name>S-adenosyl-L-methionine</name>
        <dbReference type="ChEBI" id="CHEBI:59789"/>
    </ligand>
</feature>
<feature type="binding site" evidence="2">
    <location>
        <position position="126"/>
    </location>
    <ligand>
        <name>substrate</name>
    </ligand>
</feature>
<feature type="binding site" evidence="2">
    <location>
        <position position="158"/>
    </location>
    <ligand>
        <name>substrate</name>
    </ligand>
</feature>
<feature type="binding site" evidence="2">
    <location>
        <begin position="199"/>
        <end position="202"/>
    </location>
    <ligand>
        <name>substrate</name>
    </ligand>
</feature>
<evidence type="ECO:0000250" key="1"/>
<evidence type="ECO:0000255" key="2">
    <source>
        <dbReference type="HAMAP-Rule" id="MF_01057"/>
    </source>
</evidence>
<organism>
    <name type="scientific">Oenococcus oeni (strain ATCC BAA-331 / PSU-1)</name>
    <dbReference type="NCBI Taxonomy" id="203123"/>
    <lineage>
        <taxon>Bacteria</taxon>
        <taxon>Bacillati</taxon>
        <taxon>Bacillota</taxon>
        <taxon>Bacilli</taxon>
        <taxon>Lactobacillales</taxon>
        <taxon>Lactobacillaceae</taxon>
        <taxon>Oenococcus</taxon>
    </lineage>
</organism>
<gene>
    <name evidence="2" type="primary">trmB</name>
    <name type="ordered locus">OEOE_1272</name>
</gene>
<sequence>MRLRSKKWAVPFIDEHPDLIIKDQRAKQLKGSWSSVFGNNHPLYLEIGSGKGQFILDNAIKYPENNFIGLELQPTAVAIAGKKAFKQEPQLANLKLILGDGGDVSDYFADNEISKIFLNHSDPWPKAKHEKRRLTAENFLKSYSKILLPNGSLELKTDNLGLFEYSLSSFKKFGLSWPEEQISYDLHHELKKNPVNIETEYEKKFAEMNQPEYWIRVNF</sequence>
<name>TRMB_OENOB</name>
<reference key="1">
    <citation type="journal article" date="2006" name="Proc. Natl. Acad. Sci. U.S.A.">
        <title>Comparative genomics of the lactic acid bacteria.</title>
        <authorList>
            <person name="Makarova K.S."/>
            <person name="Slesarev A."/>
            <person name="Wolf Y.I."/>
            <person name="Sorokin A."/>
            <person name="Mirkin B."/>
            <person name="Koonin E.V."/>
            <person name="Pavlov A."/>
            <person name="Pavlova N."/>
            <person name="Karamychev V."/>
            <person name="Polouchine N."/>
            <person name="Shakhova V."/>
            <person name="Grigoriev I."/>
            <person name="Lou Y."/>
            <person name="Rohksar D."/>
            <person name="Lucas S."/>
            <person name="Huang K."/>
            <person name="Goodstein D.M."/>
            <person name="Hawkins T."/>
            <person name="Plengvidhya V."/>
            <person name="Welker D."/>
            <person name="Hughes J."/>
            <person name="Goh Y."/>
            <person name="Benson A."/>
            <person name="Baldwin K."/>
            <person name="Lee J.-H."/>
            <person name="Diaz-Muniz I."/>
            <person name="Dosti B."/>
            <person name="Smeianov V."/>
            <person name="Wechter W."/>
            <person name="Barabote R."/>
            <person name="Lorca G."/>
            <person name="Altermann E."/>
            <person name="Barrangou R."/>
            <person name="Ganesan B."/>
            <person name="Xie Y."/>
            <person name="Rawsthorne H."/>
            <person name="Tamir D."/>
            <person name="Parker C."/>
            <person name="Breidt F."/>
            <person name="Broadbent J.R."/>
            <person name="Hutkins R."/>
            <person name="O'Sullivan D."/>
            <person name="Steele J."/>
            <person name="Unlu G."/>
            <person name="Saier M.H. Jr."/>
            <person name="Klaenhammer T."/>
            <person name="Richardson P."/>
            <person name="Kozyavkin S."/>
            <person name="Weimer B.C."/>
            <person name="Mills D.A."/>
        </authorList>
    </citation>
    <scope>NUCLEOTIDE SEQUENCE [LARGE SCALE GENOMIC DNA]</scope>
    <source>
        <strain>ATCC BAA-331 / PSU-1</strain>
    </source>
</reference>
<keyword id="KW-0489">Methyltransferase</keyword>
<keyword id="KW-1185">Reference proteome</keyword>
<keyword id="KW-0949">S-adenosyl-L-methionine</keyword>
<keyword id="KW-0808">Transferase</keyword>
<keyword id="KW-0819">tRNA processing</keyword>
<protein>
    <recommendedName>
        <fullName evidence="2">tRNA (guanine-N(7)-)-methyltransferase</fullName>
        <ecNumber evidence="2">2.1.1.33</ecNumber>
    </recommendedName>
    <alternativeName>
        <fullName evidence="2">tRNA (guanine(46)-N(7))-methyltransferase</fullName>
    </alternativeName>
    <alternativeName>
        <fullName evidence="2">tRNA(m7G46)-methyltransferase</fullName>
    </alternativeName>
</protein>